<reference key="1">
    <citation type="submission" date="2007-12" db="EMBL/GenBank/DDBJ databases">
        <title>Complete sequence of Methylobacterium extorquens PA1.</title>
        <authorList>
            <consortium name="US DOE Joint Genome Institute"/>
            <person name="Copeland A."/>
            <person name="Lucas S."/>
            <person name="Lapidus A."/>
            <person name="Barry K."/>
            <person name="Glavina del Rio T."/>
            <person name="Dalin E."/>
            <person name="Tice H."/>
            <person name="Pitluck S."/>
            <person name="Saunders E."/>
            <person name="Brettin T."/>
            <person name="Bruce D."/>
            <person name="Detter J.C."/>
            <person name="Han C."/>
            <person name="Schmutz J."/>
            <person name="Larimer F."/>
            <person name="Land M."/>
            <person name="Hauser L."/>
            <person name="Kyrpides N."/>
            <person name="Kim E."/>
            <person name="Marx C."/>
            <person name="Richardson P."/>
        </authorList>
    </citation>
    <scope>NUCLEOTIDE SEQUENCE [LARGE SCALE GENOMIC DNA]</scope>
    <source>
        <strain>PA1</strain>
    </source>
</reference>
<name>RPOB_METEP</name>
<gene>
    <name evidence="1" type="primary">rpoB</name>
    <name type="ordered locus">Mext_4017</name>
</gene>
<protein>
    <recommendedName>
        <fullName evidence="1">DNA-directed RNA polymerase subunit beta</fullName>
        <shortName evidence="1">RNAP subunit beta</shortName>
        <ecNumber evidence="1">2.7.7.6</ecNumber>
    </recommendedName>
    <alternativeName>
        <fullName evidence="1">RNA polymerase subunit beta</fullName>
    </alternativeName>
    <alternativeName>
        <fullName evidence="1">Transcriptase subunit beta</fullName>
    </alternativeName>
</protein>
<accession>A9W8N8</accession>
<comment type="function">
    <text evidence="1">DNA-dependent RNA polymerase catalyzes the transcription of DNA into RNA using the four ribonucleoside triphosphates as substrates.</text>
</comment>
<comment type="catalytic activity">
    <reaction evidence="1">
        <text>RNA(n) + a ribonucleoside 5'-triphosphate = RNA(n+1) + diphosphate</text>
        <dbReference type="Rhea" id="RHEA:21248"/>
        <dbReference type="Rhea" id="RHEA-COMP:14527"/>
        <dbReference type="Rhea" id="RHEA-COMP:17342"/>
        <dbReference type="ChEBI" id="CHEBI:33019"/>
        <dbReference type="ChEBI" id="CHEBI:61557"/>
        <dbReference type="ChEBI" id="CHEBI:140395"/>
        <dbReference type="EC" id="2.7.7.6"/>
    </reaction>
</comment>
<comment type="subunit">
    <text evidence="1">The RNAP catalytic core consists of 2 alpha, 1 beta, 1 beta' and 1 omega subunit. When a sigma factor is associated with the core the holoenzyme is formed, which can initiate transcription.</text>
</comment>
<comment type="similarity">
    <text evidence="1">Belongs to the RNA polymerase beta chain family.</text>
</comment>
<dbReference type="EC" id="2.7.7.6" evidence="1"/>
<dbReference type="EMBL" id="CP000908">
    <property type="protein sequence ID" value="ABY32387.1"/>
    <property type="molecule type" value="Genomic_DNA"/>
</dbReference>
<dbReference type="RefSeq" id="WP_003597540.1">
    <property type="nucleotide sequence ID" value="NC_010172.1"/>
</dbReference>
<dbReference type="SMR" id="A9W8N8"/>
<dbReference type="GeneID" id="72991735"/>
<dbReference type="KEGG" id="mex:Mext_4017"/>
<dbReference type="eggNOG" id="COG0085">
    <property type="taxonomic scope" value="Bacteria"/>
</dbReference>
<dbReference type="HOGENOM" id="CLU_000524_4_0_5"/>
<dbReference type="BioCyc" id="MEXT419610:MEXT_RS20175-MONOMER"/>
<dbReference type="GO" id="GO:0000428">
    <property type="term" value="C:DNA-directed RNA polymerase complex"/>
    <property type="evidence" value="ECO:0007669"/>
    <property type="project" value="UniProtKB-KW"/>
</dbReference>
<dbReference type="GO" id="GO:0003677">
    <property type="term" value="F:DNA binding"/>
    <property type="evidence" value="ECO:0007669"/>
    <property type="project" value="UniProtKB-UniRule"/>
</dbReference>
<dbReference type="GO" id="GO:0003899">
    <property type="term" value="F:DNA-directed RNA polymerase activity"/>
    <property type="evidence" value="ECO:0007669"/>
    <property type="project" value="UniProtKB-UniRule"/>
</dbReference>
<dbReference type="GO" id="GO:0032549">
    <property type="term" value="F:ribonucleoside binding"/>
    <property type="evidence" value="ECO:0007669"/>
    <property type="project" value="InterPro"/>
</dbReference>
<dbReference type="GO" id="GO:0006351">
    <property type="term" value="P:DNA-templated transcription"/>
    <property type="evidence" value="ECO:0007669"/>
    <property type="project" value="UniProtKB-UniRule"/>
</dbReference>
<dbReference type="CDD" id="cd00653">
    <property type="entry name" value="RNA_pol_B_RPB2"/>
    <property type="match status" value="1"/>
</dbReference>
<dbReference type="FunFam" id="3.90.1800.10:FF:000001">
    <property type="entry name" value="DNA-directed RNA polymerase subunit beta"/>
    <property type="match status" value="1"/>
</dbReference>
<dbReference type="Gene3D" id="2.40.50.100">
    <property type="match status" value="1"/>
</dbReference>
<dbReference type="Gene3D" id="2.40.50.150">
    <property type="match status" value="1"/>
</dbReference>
<dbReference type="Gene3D" id="3.90.1100.10">
    <property type="match status" value="2"/>
</dbReference>
<dbReference type="Gene3D" id="2.30.150.10">
    <property type="entry name" value="DNA-directed RNA polymerase, beta subunit, external 1 domain"/>
    <property type="match status" value="1"/>
</dbReference>
<dbReference type="Gene3D" id="2.40.270.10">
    <property type="entry name" value="DNA-directed RNA polymerase, subunit 2, domain 6"/>
    <property type="match status" value="1"/>
</dbReference>
<dbReference type="Gene3D" id="3.90.1800.10">
    <property type="entry name" value="RNA polymerase alpha subunit dimerisation domain"/>
    <property type="match status" value="1"/>
</dbReference>
<dbReference type="Gene3D" id="3.90.1110.10">
    <property type="entry name" value="RNA polymerase Rpb2, domain 2"/>
    <property type="match status" value="1"/>
</dbReference>
<dbReference type="HAMAP" id="MF_01321">
    <property type="entry name" value="RNApol_bact_RpoB"/>
    <property type="match status" value="1"/>
</dbReference>
<dbReference type="InterPro" id="IPR042107">
    <property type="entry name" value="DNA-dir_RNA_pol_bsu_ext_1_sf"/>
</dbReference>
<dbReference type="InterPro" id="IPR019462">
    <property type="entry name" value="DNA-dir_RNA_pol_bsu_external_1"/>
</dbReference>
<dbReference type="InterPro" id="IPR015712">
    <property type="entry name" value="DNA-dir_RNA_pol_su2"/>
</dbReference>
<dbReference type="InterPro" id="IPR007120">
    <property type="entry name" value="DNA-dir_RNAP_su2_dom"/>
</dbReference>
<dbReference type="InterPro" id="IPR037033">
    <property type="entry name" value="DNA-dir_RNAP_su2_hyb_sf"/>
</dbReference>
<dbReference type="InterPro" id="IPR010243">
    <property type="entry name" value="RNA_pol_bsu_bac"/>
</dbReference>
<dbReference type="InterPro" id="IPR007121">
    <property type="entry name" value="RNA_pol_bsu_CS"/>
</dbReference>
<dbReference type="InterPro" id="IPR007644">
    <property type="entry name" value="RNA_pol_bsu_protrusion"/>
</dbReference>
<dbReference type="InterPro" id="IPR007642">
    <property type="entry name" value="RNA_pol_Rpb2_2"/>
</dbReference>
<dbReference type="InterPro" id="IPR037034">
    <property type="entry name" value="RNA_pol_Rpb2_2_sf"/>
</dbReference>
<dbReference type="InterPro" id="IPR007645">
    <property type="entry name" value="RNA_pol_Rpb2_3"/>
</dbReference>
<dbReference type="InterPro" id="IPR007641">
    <property type="entry name" value="RNA_pol_Rpb2_7"/>
</dbReference>
<dbReference type="InterPro" id="IPR014724">
    <property type="entry name" value="RNA_pol_RPB2_OB-fold"/>
</dbReference>
<dbReference type="NCBIfam" id="NF001616">
    <property type="entry name" value="PRK00405.1"/>
    <property type="match status" value="1"/>
</dbReference>
<dbReference type="NCBIfam" id="TIGR02013">
    <property type="entry name" value="rpoB"/>
    <property type="match status" value="1"/>
</dbReference>
<dbReference type="PANTHER" id="PTHR20856">
    <property type="entry name" value="DNA-DIRECTED RNA POLYMERASE I SUBUNIT 2"/>
    <property type="match status" value="1"/>
</dbReference>
<dbReference type="Pfam" id="PF04563">
    <property type="entry name" value="RNA_pol_Rpb2_1"/>
    <property type="match status" value="1"/>
</dbReference>
<dbReference type="Pfam" id="PF04561">
    <property type="entry name" value="RNA_pol_Rpb2_2"/>
    <property type="match status" value="2"/>
</dbReference>
<dbReference type="Pfam" id="PF04565">
    <property type="entry name" value="RNA_pol_Rpb2_3"/>
    <property type="match status" value="1"/>
</dbReference>
<dbReference type="Pfam" id="PF10385">
    <property type="entry name" value="RNA_pol_Rpb2_45"/>
    <property type="match status" value="1"/>
</dbReference>
<dbReference type="Pfam" id="PF00562">
    <property type="entry name" value="RNA_pol_Rpb2_6"/>
    <property type="match status" value="1"/>
</dbReference>
<dbReference type="Pfam" id="PF04560">
    <property type="entry name" value="RNA_pol_Rpb2_7"/>
    <property type="match status" value="1"/>
</dbReference>
<dbReference type="SUPFAM" id="SSF64484">
    <property type="entry name" value="beta and beta-prime subunits of DNA dependent RNA-polymerase"/>
    <property type="match status" value="1"/>
</dbReference>
<dbReference type="PROSITE" id="PS01166">
    <property type="entry name" value="RNA_POL_BETA"/>
    <property type="match status" value="1"/>
</dbReference>
<sequence>MANTLVGRKRIRKFFGKIREVAEMPNLIEVQKASYDQFLMVDEPEGGRADEGLQSVFKSVFPISDFASTALLEFVRYTFEQPKYDVDECRQRGITFAAPLKVTLRLIVFDVDPDTGAKSVKDIKEQDVYMGDMPLMTDNGTFIVNGTERVIVSQMHRSPGVFFDHDKGKTHSSGKLLFAARIIPYRGSWLDVEFDAKDIVHVRIDRKRKLPVTSLLFALGLDGEEILSTFYNRVAYQRDGADWRVPFDAERLKGFKASVDLIDADSGEVVLEAGKKLNARNARLIGEKGTKFLRAADEDLIGQYIAEDLVNMKTGEIWAEAGDEISEKLLKSLDDVGVTELPVLDIDHVNVGPYIRNTLAVDKNSAREGALFDIYRVMRPGEPPTLDTAEAMFHSLFFDSERYDLSAVGRVKMNMRLDLDAADTVRTLRREDMLAVVKALVDLRDGKGEIDDIDHLGNRRVRSVGELMENQYRLGLLRMERAIKERMSSVDIDTVMPQDLINAKPAAAAVREFFGSSQLSQFMDQTNPLSEVTHKRRLSALGPGGLTRERAGFEVRDVHPTHYGRICPIETPEGPNIGLINSLATFARVNKYGFIETPFRRVKDGVVTDEVAYLSAMEEAKYYVAQANAGMDEGRKLTDDLVVCRRAGEVIVVAPDRVDLMDVSPKQLVSVAAALIPFLENDDANRALMGSNMQRQAVPLVRADAPFVGTGMEAVVARDSGAAIAARRSGIVDQVDATRIVIRASEETDPTKPGVDIYRLQKFQRSNQSTCITQKPLVRVGEPVKKGEIIADGPSTEFGELALGRNVLVAFMPWNGYNFEDSILLSERIVKDDVFTSIHIEEFEVMARDTKLGPEEITRDIPNVSEEALKNLDEAGIVYIGAEVHAGDILVGKITPKGESPMTPEEKLLRAIFGEKASDVRDTSLRVPPGVTGTIVEVRVFNRHGVDKDERAQAIEREEIERLAKDRDDEQTILDRNTYARLAEVLIGQSPIAGPKGFRKDTTLTREIISEYPRSQWWQFAVVDDRMMTEIEAMQKQYDESKKRLEQRFLDKVEKLQRGDELPPGVMKMVKVFVAVKRKIQPGDKMAGRHGNKGVVSRIVPIEDMPFLEDGTHADIVLNPLGVPSRMNVGQILETHLGWAAAGLGRKVSKAVDAYLKNQDIAPLRAEMEAIYSPSELEGLSDEALAEAGNNVRRGVPMATPVFNGAKEADIETMLEMAGLDRSAQSTLYDGRTGEPFDRKVTMGYIYMLKLHHLVDDKIHARSIGPYSLVTQQPLGGKAQFGGQRFGEMEVWALEAYGAAYTLQEMLTVKSDDVAGRTKVYEAIVRGDDTFEAGIPESFNVLVKEMRSLGLNVELTSSKQQQAANDQIEPPADAAE</sequence>
<keyword id="KW-0240">DNA-directed RNA polymerase</keyword>
<keyword id="KW-0548">Nucleotidyltransferase</keyword>
<keyword id="KW-0804">Transcription</keyword>
<keyword id="KW-0808">Transferase</keyword>
<feature type="chain" id="PRO_1000141709" description="DNA-directed RNA polymerase subunit beta">
    <location>
        <begin position="1"/>
        <end position="1376"/>
    </location>
</feature>
<evidence type="ECO:0000255" key="1">
    <source>
        <dbReference type="HAMAP-Rule" id="MF_01321"/>
    </source>
</evidence>
<proteinExistence type="inferred from homology"/>
<organism>
    <name type="scientific">Methylorubrum extorquens (strain PA1)</name>
    <name type="common">Methylobacterium extorquens</name>
    <dbReference type="NCBI Taxonomy" id="419610"/>
    <lineage>
        <taxon>Bacteria</taxon>
        <taxon>Pseudomonadati</taxon>
        <taxon>Pseudomonadota</taxon>
        <taxon>Alphaproteobacteria</taxon>
        <taxon>Hyphomicrobiales</taxon>
        <taxon>Methylobacteriaceae</taxon>
        <taxon>Methylorubrum</taxon>
    </lineage>
</organism>